<accession>B5QWX3</accession>
<sequence length="278" mass="30256">MNNILSEEVLNVTDFTTSRQLTLWKREDLQSPQLDDVAEEVPVALVYNGISHVVMMASPKDLTHFAMGFSLSEGIIDSPREIYGMDVVPSCNGLEVQIDLSSRRFMGLKARRRALAGRTGCGVCGVEQLNDIGKPVQPLPFSQTFNLGNLDRALKHLNDFQPTGKLTGCTHAAAWVMPSGELAGGHEDVGRHVALDKLLGRRATEGEEWRQGAALVSSRASYEMVQKSAMCGVEILFAVSAATTLAVDVAERCNLTLVGFCKPGRATIYTHPQRLIAD</sequence>
<dbReference type="EMBL" id="AM933172">
    <property type="protein sequence ID" value="CAR35401.1"/>
    <property type="molecule type" value="Genomic_DNA"/>
</dbReference>
<dbReference type="RefSeq" id="WP_001059743.1">
    <property type="nucleotide sequence ID" value="NC_011294.1"/>
</dbReference>
<dbReference type="SMR" id="B5QWX3"/>
<dbReference type="KEGG" id="set:SEN3827"/>
<dbReference type="HOGENOM" id="CLU_056887_2_0_6"/>
<dbReference type="Proteomes" id="UP000000613">
    <property type="component" value="Chromosome"/>
</dbReference>
<dbReference type="GO" id="GO:0005737">
    <property type="term" value="C:cytoplasm"/>
    <property type="evidence" value="ECO:0007669"/>
    <property type="project" value="UniProtKB-SubCell"/>
</dbReference>
<dbReference type="GO" id="GO:0097163">
    <property type="term" value="F:sulfur carrier activity"/>
    <property type="evidence" value="ECO:0007669"/>
    <property type="project" value="UniProtKB-UniRule"/>
</dbReference>
<dbReference type="GO" id="GO:0016783">
    <property type="term" value="F:sulfurtransferase activity"/>
    <property type="evidence" value="ECO:0007669"/>
    <property type="project" value="InterPro"/>
</dbReference>
<dbReference type="GO" id="GO:0006777">
    <property type="term" value="P:Mo-molybdopterin cofactor biosynthetic process"/>
    <property type="evidence" value="ECO:0007669"/>
    <property type="project" value="UniProtKB-UniRule"/>
</dbReference>
<dbReference type="Gene3D" id="3.10.20.10">
    <property type="match status" value="1"/>
</dbReference>
<dbReference type="Gene3D" id="3.40.140.10">
    <property type="entry name" value="Cytidine Deaminase, domain 2"/>
    <property type="match status" value="1"/>
</dbReference>
<dbReference type="HAMAP" id="MF_00187">
    <property type="entry name" value="FdhD"/>
    <property type="match status" value="1"/>
</dbReference>
<dbReference type="InterPro" id="IPR016193">
    <property type="entry name" value="Cytidine_deaminase-like"/>
</dbReference>
<dbReference type="InterPro" id="IPR003786">
    <property type="entry name" value="FdhD"/>
</dbReference>
<dbReference type="NCBIfam" id="TIGR00129">
    <property type="entry name" value="fdhD_narQ"/>
    <property type="match status" value="1"/>
</dbReference>
<dbReference type="PANTHER" id="PTHR30592">
    <property type="entry name" value="FORMATE DEHYDROGENASE"/>
    <property type="match status" value="1"/>
</dbReference>
<dbReference type="PANTHER" id="PTHR30592:SF1">
    <property type="entry name" value="SULFUR CARRIER PROTEIN FDHD"/>
    <property type="match status" value="1"/>
</dbReference>
<dbReference type="Pfam" id="PF02634">
    <property type="entry name" value="FdhD-NarQ"/>
    <property type="match status" value="1"/>
</dbReference>
<dbReference type="PIRSF" id="PIRSF015626">
    <property type="entry name" value="FdhD"/>
    <property type="match status" value="1"/>
</dbReference>
<dbReference type="SUPFAM" id="SSF53927">
    <property type="entry name" value="Cytidine deaminase-like"/>
    <property type="match status" value="1"/>
</dbReference>
<keyword id="KW-0963">Cytoplasm</keyword>
<keyword id="KW-0501">Molybdenum cofactor biosynthesis</keyword>
<protein>
    <recommendedName>
        <fullName evidence="1">Sulfur carrier protein FdhD</fullName>
    </recommendedName>
</protein>
<gene>
    <name evidence="1" type="primary">fdhD</name>
    <name type="ordered locus">SEN3827</name>
</gene>
<reference key="1">
    <citation type="journal article" date="2008" name="Genome Res.">
        <title>Comparative genome analysis of Salmonella enteritidis PT4 and Salmonella gallinarum 287/91 provides insights into evolutionary and host adaptation pathways.</title>
        <authorList>
            <person name="Thomson N.R."/>
            <person name="Clayton D.J."/>
            <person name="Windhorst D."/>
            <person name="Vernikos G."/>
            <person name="Davidson S."/>
            <person name="Churcher C."/>
            <person name="Quail M.A."/>
            <person name="Stevens M."/>
            <person name="Jones M.A."/>
            <person name="Watson M."/>
            <person name="Barron A."/>
            <person name="Layton A."/>
            <person name="Pickard D."/>
            <person name="Kingsley R.A."/>
            <person name="Bignell A."/>
            <person name="Clark L."/>
            <person name="Harris B."/>
            <person name="Ormond D."/>
            <person name="Abdellah Z."/>
            <person name="Brooks K."/>
            <person name="Cherevach I."/>
            <person name="Chillingworth T."/>
            <person name="Woodward J."/>
            <person name="Norberczak H."/>
            <person name="Lord A."/>
            <person name="Arrowsmith C."/>
            <person name="Jagels K."/>
            <person name="Moule S."/>
            <person name="Mungall K."/>
            <person name="Saunders M."/>
            <person name="Whitehead S."/>
            <person name="Chabalgoity J.A."/>
            <person name="Maskell D."/>
            <person name="Humphreys T."/>
            <person name="Roberts M."/>
            <person name="Barrow P.A."/>
            <person name="Dougan G."/>
            <person name="Parkhill J."/>
        </authorList>
    </citation>
    <scope>NUCLEOTIDE SEQUENCE [LARGE SCALE GENOMIC DNA]</scope>
    <source>
        <strain>P125109</strain>
    </source>
</reference>
<comment type="function">
    <text evidence="1">Required for formate dehydrogenase (FDH) activity. Acts as a sulfur carrier protein that transfers sulfur from IscS to the molybdenum cofactor prior to its insertion into FDH.</text>
</comment>
<comment type="subcellular location">
    <subcellularLocation>
        <location evidence="1">Cytoplasm</location>
    </subcellularLocation>
</comment>
<comment type="similarity">
    <text evidence="1">Belongs to the FdhD family.</text>
</comment>
<proteinExistence type="inferred from homology"/>
<name>FDHD_SALEP</name>
<organism>
    <name type="scientific">Salmonella enteritidis PT4 (strain P125109)</name>
    <dbReference type="NCBI Taxonomy" id="550537"/>
    <lineage>
        <taxon>Bacteria</taxon>
        <taxon>Pseudomonadati</taxon>
        <taxon>Pseudomonadota</taxon>
        <taxon>Gammaproteobacteria</taxon>
        <taxon>Enterobacterales</taxon>
        <taxon>Enterobacteriaceae</taxon>
        <taxon>Salmonella</taxon>
    </lineage>
</organism>
<feature type="chain" id="PRO_1000098788" description="Sulfur carrier protein FdhD">
    <location>
        <begin position="1"/>
        <end position="278"/>
    </location>
</feature>
<feature type="active site" description="Cysteine persulfide intermediate" evidence="1">
    <location>
        <position position="121"/>
    </location>
</feature>
<feature type="binding site" evidence="1">
    <location>
        <begin position="260"/>
        <end position="265"/>
    </location>
    <ligand>
        <name>Mo-bis(molybdopterin guanine dinucleotide)</name>
        <dbReference type="ChEBI" id="CHEBI:60539"/>
    </ligand>
</feature>
<evidence type="ECO:0000255" key="1">
    <source>
        <dbReference type="HAMAP-Rule" id="MF_00187"/>
    </source>
</evidence>